<keyword id="KW-0106">Calcium</keyword>
<keyword id="KW-1015">Disulfide bond</keyword>
<keyword id="KW-0349">Heme</keyword>
<keyword id="KW-0376">Hydrogen peroxide</keyword>
<keyword id="KW-0408">Iron</keyword>
<keyword id="KW-0479">Metal-binding</keyword>
<keyword id="KW-0560">Oxidoreductase</keyword>
<keyword id="KW-0575">Peroxidase</keyword>
<keyword id="KW-1185">Reference proteome</keyword>
<keyword id="KW-0964">Secreted</keyword>
<keyword id="KW-0732">Signal</keyword>
<feature type="signal peptide" evidence="1">
    <location>
        <begin position="1"/>
        <end position="24"/>
    </location>
</feature>
<feature type="chain" id="PRO_0000023735" description="Peroxidase 70">
    <location>
        <begin position="25"/>
        <end position="330"/>
    </location>
</feature>
<feature type="active site" description="Proton acceptor" evidence="2 3">
    <location>
        <position position="74"/>
    </location>
</feature>
<feature type="binding site" evidence="2">
    <location>
        <position position="75"/>
    </location>
    <ligand>
        <name>Ca(2+)</name>
        <dbReference type="ChEBI" id="CHEBI:29108"/>
        <label>1</label>
    </ligand>
</feature>
<feature type="binding site" evidence="2">
    <location>
        <position position="78"/>
    </location>
    <ligand>
        <name>Ca(2+)</name>
        <dbReference type="ChEBI" id="CHEBI:29108"/>
        <label>1</label>
    </ligand>
</feature>
<feature type="binding site" evidence="2">
    <location>
        <position position="80"/>
    </location>
    <ligand>
        <name>Ca(2+)</name>
        <dbReference type="ChEBI" id="CHEBI:29108"/>
        <label>1</label>
    </ligand>
</feature>
<feature type="binding site" evidence="2">
    <location>
        <position position="82"/>
    </location>
    <ligand>
        <name>Ca(2+)</name>
        <dbReference type="ChEBI" id="CHEBI:29108"/>
        <label>1</label>
    </ligand>
</feature>
<feature type="binding site" evidence="2">
    <location>
        <position position="84"/>
    </location>
    <ligand>
        <name>Ca(2+)</name>
        <dbReference type="ChEBI" id="CHEBI:29108"/>
        <label>1</label>
    </ligand>
</feature>
<feature type="binding site" evidence="2">
    <location>
        <position position="165"/>
    </location>
    <ligand>
        <name>substrate</name>
    </ligand>
</feature>
<feature type="binding site" description="axial binding residue" evidence="2">
    <location>
        <position position="195"/>
    </location>
    <ligand>
        <name>heme b</name>
        <dbReference type="ChEBI" id="CHEBI:60344"/>
    </ligand>
    <ligandPart>
        <name>Fe</name>
        <dbReference type="ChEBI" id="CHEBI:18248"/>
    </ligandPart>
</feature>
<feature type="binding site" evidence="2">
    <location>
        <position position="196"/>
    </location>
    <ligand>
        <name>Ca(2+)</name>
        <dbReference type="ChEBI" id="CHEBI:29108"/>
        <label>2</label>
    </ligand>
</feature>
<feature type="binding site" evidence="2">
    <location>
        <position position="247"/>
    </location>
    <ligand>
        <name>Ca(2+)</name>
        <dbReference type="ChEBI" id="CHEBI:29108"/>
        <label>2</label>
    </ligand>
</feature>
<feature type="binding site" evidence="2">
    <location>
        <position position="250"/>
    </location>
    <ligand>
        <name>Ca(2+)</name>
        <dbReference type="ChEBI" id="CHEBI:29108"/>
        <label>2</label>
    </ligand>
</feature>
<feature type="binding site" evidence="2">
    <location>
        <position position="255"/>
    </location>
    <ligand>
        <name>Ca(2+)</name>
        <dbReference type="ChEBI" id="CHEBI:29108"/>
        <label>2</label>
    </ligand>
</feature>
<feature type="site" description="Transition state stabilizer" evidence="2">
    <location>
        <position position="70"/>
    </location>
</feature>
<feature type="disulfide bond" evidence="2">
    <location>
        <begin position="43"/>
        <end position="119"/>
    </location>
</feature>
<feature type="disulfide bond" evidence="2">
    <location>
        <begin position="76"/>
        <end position="81"/>
    </location>
</feature>
<feature type="disulfide bond" evidence="2">
    <location>
        <begin position="125"/>
        <end position="326"/>
    </location>
</feature>
<feature type="disulfide bond" evidence="2">
    <location>
        <begin position="202"/>
        <end position="234"/>
    </location>
</feature>
<organism>
    <name type="scientific">Arabidopsis thaliana</name>
    <name type="common">Mouse-ear cress</name>
    <dbReference type="NCBI Taxonomy" id="3702"/>
    <lineage>
        <taxon>Eukaryota</taxon>
        <taxon>Viridiplantae</taxon>
        <taxon>Streptophyta</taxon>
        <taxon>Embryophyta</taxon>
        <taxon>Tracheophyta</taxon>
        <taxon>Spermatophyta</taxon>
        <taxon>Magnoliopsida</taxon>
        <taxon>eudicotyledons</taxon>
        <taxon>Gunneridae</taxon>
        <taxon>Pentapetalae</taxon>
        <taxon>rosids</taxon>
        <taxon>malvids</taxon>
        <taxon>Brassicales</taxon>
        <taxon>Brassicaceae</taxon>
        <taxon>Camelineae</taxon>
        <taxon>Arabidopsis</taxon>
    </lineage>
</organism>
<accession>Q9FMI7</accession>
<protein>
    <recommendedName>
        <fullName>Peroxidase 70</fullName>
        <shortName>Atperox P70</shortName>
        <ecNumber>1.11.1.7</ecNumber>
    </recommendedName>
    <alternativeName>
        <fullName>ATP45</fullName>
    </alternativeName>
</protein>
<name>PER70_ARATH</name>
<sequence>MRSFTNLNPCYVLLPFFLVLATNATHTNNFLPRPRTGYYGSACWNVESIVRSVVESNYLANPANAPGILRMHFHDCFVQGCDASVLLAGPNSERTAIPNLSLRGFNVIEEAKTQLEIACPRTVSCADILALAARDFVHLAGGPWWPVPLGRLDGRISLASNVILPGPTDSVAVQKLRFAEKNLNTQDLVVLAAGHTIGTAGCIVFRDRFFNYDNTGSPDPTIAPSFVPLIQAQCPLNGDPATRVVLDTGSGDQFDTSYLNNLKNGRGLLESDQVLWTNLETRPIVERLLGLRFPFLIFGLEFARSMTKMSQIEIKTGLDGEIRRVCSAVN</sequence>
<comment type="function">
    <text>Removal of H(2)O(2), oxidation of toxic reductants, biosynthesis and degradation of lignin, suberization, auxin catabolism, response to environmental stresses such as wounding, pathogen attack and oxidative stress. These functions might be dependent on each isozyme/isoform in each plant tissue.</text>
</comment>
<comment type="catalytic activity">
    <reaction>
        <text>2 a phenolic donor + H2O2 = 2 a phenolic radical donor + 2 H2O</text>
        <dbReference type="Rhea" id="RHEA:56136"/>
        <dbReference type="ChEBI" id="CHEBI:15377"/>
        <dbReference type="ChEBI" id="CHEBI:16240"/>
        <dbReference type="ChEBI" id="CHEBI:139520"/>
        <dbReference type="ChEBI" id="CHEBI:139521"/>
        <dbReference type="EC" id="1.11.1.7"/>
    </reaction>
</comment>
<comment type="cofactor">
    <cofactor evidence="2">
        <name>heme b</name>
        <dbReference type="ChEBI" id="CHEBI:60344"/>
    </cofactor>
    <text evidence="2">Binds 1 heme b (iron(II)-protoporphyrin IX) group per subunit.</text>
</comment>
<comment type="cofactor">
    <cofactor evidence="2">
        <name>Ca(2+)</name>
        <dbReference type="ChEBI" id="CHEBI:29108"/>
    </cofactor>
    <text evidence="2">Binds 2 calcium ions per subunit.</text>
</comment>
<comment type="subcellular location">
    <subcellularLocation>
        <location evidence="2">Secreted</location>
    </subcellularLocation>
</comment>
<comment type="miscellaneous">
    <text>There are 73 peroxidase genes in A.thaliana.</text>
</comment>
<comment type="similarity">
    <text evidence="2">Belongs to the peroxidase family. Classical plant (class III) peroxidase subfamily.</text>
</comment>
<proteinExistence type="evidence at transcript level"/>
<dbReference type="EC" id="1.11.1.7"/>
<dbReference type="EMBL" id="AB008266">
    <property type="protein sequence ID" value="BAB10279.1"/>
    <property type="molecule type" value="Genomic_DNA"/>
</dbReference>
<dbReference type="EMBL" id="CP002688">
    <property type="protein sequence ID" value="AED97841.1"/>
    <property type="molecule type" value="Genomic_DNA"/>
</dbReference>
<dbReference type="EMBL" id="AY065173">
    <property type="protein sequence ID" value="AAL38349.1"/>
    <property type="molecule type" value="mRNA"/>
</dbReference>
<dbReference type="EMBL" id="BT003353">
    <property type="protein sequence ID" value="AAO29971.1"/>
    <property type="molecule type" value="mRNA"/>
</dbReference>
<dbReference type="RefSeq" id="NP_201216.1">
    <property type="nucleotide sequence ID" value="NM_125807.5"/>
</dbReference>
<dbReference type="SMR" id="Q9FMI7"/>
<dbReference type="BioGRID" id="21774">
    <property type="interactions" value="1"/>
</dbReference>
<dbReference type="FunCoup" id="Q9FMI7">
    <property type="interactions" value="127"/>
</dbReference>
<dbReference type="STRING" id="3702.Q9FMI7"/>
<dbReference type="PeroxiBase" id="236">
    <property type="entry name" value="AtPrx70"/>
</dbReference>
<dbReference type="GlyGen" id="Q9FMI7">
    <property type="glycosylation" value="1 site"/>
</dbReference>
<dbReference type="PaxDb" id="3702-AT5G64110.1"/>
<dbReference type="ProteomicsDB" id="236773"/>
<dbReference type="EnsemblPlants" id="AT5G64110.1">
    <property type="protein sequence ID" value="AT5G64110.1"/>
    <property type="gene ID" value="AT5G64110"/>
</dbReference>
<dbReference type="GeneID" id="836532"/>
<dbReference type="Gramene" id="AT5G64110.1">
    <property type="protein sequence ID" value="AT5G64110.1"/>
    <property type="gene ID" value="AT5G64110"/>
</dbReference>
<dbReference type="KEGG" id="ath:AT5G64110"/>
<dbReference type="Araport" id="AT5G64110"/>
<dbReference type="TAIR" id="AT5G64110"/>
<dbReference type="eggNOG" id="ENOG502QQ2G">
    <property type="taxonomic scope" value="Eukaryota"/>
</dbReference>
<dbReference type="HOGENOM" id="CLU_010543_0_3_1"/>
<dbReference type="InParanoid" id="Q9FMI7"/>
<dbReference type="OMA" id="AQCPLNG"/>
<dbReference type="OrthoDB" id="1092185at2759"/>
<dbReference type="PhylomeDB" id="Q9FMI7"/>
<dbReference type="BioCyc" id="ARA:AT5G64110-MONOMER"/>
<dbReference type="PRO" id="PR:Q9FMI7"/>
<dbReference type="Proteomes" id="UP000006548">
    <property type="component" value="Chromosome 5"/>
</dbReference>
<dbReference type="ExpressionAtlas" id="Q9FMI7">
    <property type="expression patterns" value="baseline and differential"/>
</dbReference>
<dbReference type="GO" id="GO:0005576">
    <property type="term" value="C:extracellular region"/>
    <property type="evidence" value="ECO:0007669"/>
    <property type="project" value="UniProtKB-SubCell"/>
</dbReference>
<dbReference type="GO" id="GO:0099503">
    <property type="term" value="C:secretory vesicle"/>
    <property type="evidence" value="ECO:0007005"/>
    <property type="project" value="TAIR"/>
</dbReference>
<dbReference type="GO" id="GO:0020037">
    <property type="term" value="F:heme binding"/>
    <property type="evidence" value="ECO:0007669"/>
    <property type="project" value="InterPro"/>
</dbReference>
<dbReference type="GO" id="GO:0140825">
    <property type="term" value="F:lactoperoxidase activity"/>
    <property type="evidence" value="ECO:0007669"/>
    <property type="project" value="UniProtKB-EC"/>
</dbReference>
<dbReference type="GO" id="GO:0046872">
    <property type="term" value="F:metal ion binding"/>
    <property type="evidence" value="ECO:0007669"/>
    <property type="project" value="UniProtKB-KW"/>
</dbReference>
<dbReference type="GO" id="GO:0042744">
    <property type="term" value="P:hydrogen peroxide catabolic process"/>
    <property type="evidence" value="ECO:0007669"/>
    <property type="project" value="UniProtKB-KW"/>
</dbReference>
<dbReference type="GO" id="GO:0006979">
    <property type="term" value="P:response to oxidative stress"/>
    <property type="evidence" value="ECO:0007669"/>
    <property type="project" value="InterPro"/>
</dbReference>
<dbReference type="CDD" id="cd00693">
    <property type="entry name" value="secretory_peroxidase"/>
    <property type="match status" value="1"/>
</dbReference>
<dbReference type="FunFam" id="1.10.420.10:FF:000010">
    <property type="entry name" value="Peroxidase"/>
    <property type="match status" value="1"/>
</dbReference>
<dbReference type="FunFam" id="1.10.520.10:FF:000008">
    <property type="entry name" value="Peroxidase"/>
    <property type="match status" value="1"/>
</dbReference>
<dbReference type="Gene3D" id="1.10.520.10">
    <property type="match status" value="1"/>
</dbReference>
<dbReference type="Gene3D" id="1.10.420.10">
    <property type="entry name" value="Peroxidase, domain 2"/>
    <property type="match status" value="1"/>
</dbReference>
<dbReference type="InterPro" id="IPR002016">
    <property type="entry name" value="Haem_peroxidase"/>
</dbReference>
<dbReference type="InterPro" id="IPR010255">
    <property type="entry name" value="Haem_peroxidase_sf"/>
</dbReference>
<dbReference type="InterPro" id="IPR000823">
    <property type="entry name" value="Peroxidase_pln"/>
</dbReference>
<dbReference type="InterPro" id="IPR019794">
    <property type="entry name" value="Peroxidases_AS"/>
</dbReference>
<dbReference type="InterPro" id="IPR019793">
    <property type="entry name" value="Peroxidases_heam-ligand_BS"/>
</dbReference>
<dbReference type="InterPro" id="IPR033905">
    <property type="entry name" value="Secretory_peroxidase"/>
</dbReference>
<dbReference type="PANTHER" id="PTHR31235">
    <property type="entry name" value="PEROXIDASE 25-RELATED"/>
    <property type="match status" value="1"/>
</dbReference>
<dbReference type="Pfam" id="PF00141">
    <property type="entry name" value="peroxidase"/>
    <property type="match status" value="1"/>
</dbReference>
<dbReference type="PRINTS" id="PR00458">
    <property type="entry name" value="PEROXIDASE"/>
</dbReference>
<dbReference type="PRINTS" id="PR00461">
    <property type="entry name" value="PLPEROXIDASE"/>
</dbReference>
<dbReference type="SUPFAM" id="SSF48113">
    <property type="entry name" value="Heme-dependent peroxidases"/>
    <property type="match status" value="1"/>
</dbReference>
<dbReference type="PROSITE" id="PS00435">
    <property type="entry name" value="PEROXIDASE_1"/>
    <property type="match status" value="1"/>
</dbReference>
<dbReference type="PROSITE" id="PS00436">
    <property type="entry name" value="PEROXIDASE_2"/>
    <property type="match status" value="1"/>
</dbReference>
<dbReference type="PROSITE" id="PS50873">
    <property type="entry name" value="PEROXIDASE_4"/>
    <property type="match status" value="1"/>
</dbReference>
<evidence type="ECO:0000255" key="1"/>
<evidence type="ECO:0000255" key="2">
    <source>
        <dbReference type="PROSITE-ProRule" id="PRU00297"/>
    </source>
</evidence>
<evidence type="ECO:0000255" key="3">
    <source>
        <dbReference type="PROSITE-ProRule" id="PRU10012"/>
    </source>
</evidence>
<reference key="1">
    <citation type="journal article" date="1997" name="DNA Res.">
        <title>Structural analysis of Arabidopsis thaliana chromosome 5. III. Sequence features of the regions of 1,191,918 bp covered by seventeen physically assigned P1 clones.</title>
        <authorList>
            <person name="Nakamura Y."/>
            <person name="Sato S."/>
            <person name="Kaneko T."/>
            <person name="Kotani H."/>
            <person name="Asamizu E."/>
            <person name="Miyajima N."/>
            <person name="Tabata S."/>
        </authorList>
    </citation>
    <scope>NUCLEOTIDE SEQUENCE [LARGE SCALE GENOMIC DNA]</scope>
    <source>
        <strain>cv. Columbia</strain>
    </source>
</reference>
<reference key="2">
    <citation type="journal article" date="2017" name="Plant J.">
        <title>Araport11: a complete reannotation of the Arabidopsis thaliana reference genome.</title>
        <authorList>
            <person name="Cheng C.Y."/>
            <person name="Krishnakumar V."/>
            <person name="Chan A.P."/>
            <person name="Thibaud-Nissen F."/>
            <person name="Schobel S."/>
            <person name="Town C.D."/>
        </authorList>
    </citation>
    <scope>GENOME REANNOTATION</scope>
    <source>
        <strain>cv. Columbia</strain>
    </source>
</reference>
<reference key="3">
    <citation type="journal article" date="2003" name="Science">
        <title>Empirical analysis of transcriptional activity in the Arabidopsis genome.</title>
        <authorList>
            <person name="Yamada K."/>
            <person name="Lim J."/>
            <person name="Dale J.M."/>
            <person name="Chen H."/>
            <person name="Shinn P."/>
            <person name="Palm C.J."/>
            <person name="Southwick A.M."/>
            <person name="Wu H.C."/>
            <person name="Kim C.J."/>
            <person name="Nguyen M."/>
            <person name="Pham P.K."/>
            <person name="Cheuk R.F."/>
            <person name="Karlin-Newmann G."/>
            <person name="Liu S.X."/>
            <person name="Lam B."/>
            <person name="Sakano H."/>
            <person name="Wu T."/>
            <person name="Yu G."/>
            <person name="Miranda M."/>
            <person name="Quach H.L."/>
            <person name="Tripp M."/>
            <person name="Chang C.H."/>
            <person name="Lee J.M."/>
            <person name="Toriumi M.J."/>
            <person name="Chan M.M."/>
            <person name="Tang C.C."/>
            <person name="Onodera C.S."/>
            <person name="Deng J.M."/>
            <person name="Akiyama K."/>
            <person name="Ansari Y."/>
            <person name="Arakawa T."/>
            <person name="Banh J."/>
            <person name="Banno F."/>
            <person name="Bowser L."/>
            <person name="Brooks S.Y."/>
            <person name="Carninci P."/>
            <person name="Chao Q."/>
            <person name="Choy N."/>
            <person name="Enju A."/>
            <person name="Goldsmith A.D."/>
            <person name="Gurjal M."/>
            <person name="Hansen N.F."/>
            <person name="Hayashizaki Y."/>
            <person name="Johnson-Hopson C."/>
            <person name="Hsuan V.W."/>
            <person name="Iida K."/>
            <person name="Karnes M."/>
            <person name="Khan S."/>
            <person name="Koesema E."/>
            <person name="Ishida J."/>
            <person name="Jiang P.X."/>
            <person name="Jones T."/>
            <person name="Kawai J."/>
            <person name="Kamiya A."/>
            <person name="Meyers C."/>
            <person name="Nakajima M."/>
            <person name="Narusaka M."/>
            <person name="Seki M."/>
            <person name="Sakurai T."/>
            <person name="Satou M."/>
            <person name="Tamse R."/>
            <person name="Vaysberg M."/>
            <person name="Wallender E.K."/>
            <person name="Wong C."/>
            <person name="Yamamura Y."/>
            <person name="Yuan S."/>
            <person name="Shinozaki K."/>
            <person name="Davis R.W."/>
            <person name="Theologis A."/>
            <person name="Ecker J.R."/>
        </authorList>
    </citation>
    <scope>NUCLEOTIDE SEQUENCE [LARGE SCALE MRNA]</scope>
    <source>
        <strain>cv. Columbia</strain>
    </source>
</reference>
<reference key="4">
    <citation type="journal article" date="2002" name="Gene">
        <title>Analysis and expression of the class III peroxidase large gene family in Arabidopsis thaliana.</title>
        <authorList>
            <person name="Tognolli M."/>
            <person name="Penel C."/>
            <person name="Greppin H."/>
            <person name="Simon P."/>
        </authorList>
    </citation>
    <scope>GENE FAMILY ORGANIZATION</scope>
    <scope>NOMENCLATURE</scope>
    <source>
        <strain>cv. Columbia</strain>
    </source>
</reference>
<gene>
    <name type="primary">PER70</name>
    <name type="synonym">P70</name>
    <name type="ordered locus">At5g64110</name>
    <name type="ORF">MHJ24.9</name>
</gene>